<evidence type="ECO:0000255" key="1">
    <source>
        <dbReference type="HAMAP-Rule" id="MF_00443"/>
    </source>
</evidence>
<name>THIG_SALPC</name>
<sequence>MLRIADKTFDSHLFTGTGKFASSQLMVEAIRASGSQLVTLAMKRVDLRQHNDAILAPLIEAGVTLLPNTSGAKTAEEAIFAAQLAREALGTHWLKLEIHPDARWLLPDPIETLKAAEALVKQGFVVLPYCGADPVLCKRLEEVGCAAVMPLGAPIGSNQGLETKAMLEIIIQQATVPVVVDAGIGVPSHAAQALEMGADAVLVNTAIAVADDPVMMATAFRLAVEAGLLARQAVPGNRSTYASATSPLTGFLEALA</sequence>
<proteinExistence type="inferred from homology"/>
<protein>
    <recommendedName>
        <fullName evidence="1">Thiazole synthase</fullName>
        <ecNumber evidence="1">2.8.1.10</ecNumber>
    </recommendedName>
</protein>
<dbReference type="EC" id="2.8.1.10" evidence="1"/>
<dbReference type="EMBL" id="CP000857">
    <property type="protein sequence ID" value="ACN48058.1"/>
    <property type="molecule type" value="Genomic_DNA"/>
</dbReference>
<dbReference type="RefSeq" id="WP_000944068.1">
    <property type="nucleotide sequence ID" value="NC_012125.1"/>
</dbReference>
<dbReference type="SMR" id="C0Q2S2"/>
<dbReference type="KEGG" id="sei:SPC_3991"/>
<dbReference type="HOGENOM" id="CLU_062233_1_0_6"/>
<dbReference type="UniPathway" id="UPA00060"/>
<dbReference type="Proteomes" id="UP000001599">
    <property type="component" value="Chromosome"/>
</dbReference>
<dbReference type="GO" id="GO:0005737">
    <property type="term" value="C:cytoplasm"/>
    <property type="evidence" value="ECO:0007669"/>
    <property type="project" value="UniProtKB-SubCell"/>
</dbReference>
<dbReference type="GO" id="GO:1990107">
    <property type="term" value="F:thiazole synthase activity"/>
    <property type="evidence" value="ECO:0007669"/>
    <property type="project" value="UniProtKB-EC"/>
</dbReference>
<dbReference type="GO" id="GO:0009229">
    <property type="term" value="P:thiamine diphosphate biosynthetic process"/>
    <property type="evidence" value="ECO:0007669"/>
    <property type="project" value="UniProtKB-UniRule"/>
</dbReference>
<dbReference type="CDD" id="cd04728">
    <property type="entry name" value="ThiG"/>
    <property type="match status" value="1"/>
</dbReference>
<dbReference type="FunFam" id="3.20.20.70:FF:000049">
    <property type="entry name" value="Thiazole synthase"/>
    <property type="match status" value="1"/>
</dbReference>
<dbReference type="Gene3D" id="3.20.20.70">
    <property type="entry name" value="Aldolase class I"/>
    <property type="match status" value="1"/>
</dbReference>
<dbReference type="HAMAP" id="MF_00443">
    <property type="entry name" value="ThiG"/>
    <property type="match status" value="1"/>
</dbReference>
<dbReference type="InterPro" id="IPR013785">
    <property type="entry name" value="Aldolase_TIM"/>
</dbReference>
<dbReference type="InterPro" id="IPR033983">
    <property type="entry name" value="Thiazole_synthase_ThiG"/>
</dbReference>
<dbReference type="InterPro" id="IPR008867">
    <property type="entry name" value="ThiG"/>
</dbReference>
<dbReference type="PANTHER" id="PTHR34266">
    <property type="entry name" value="THIAZOLE SYNTHASE"/>
    <property type="match status" value="1"/>
</dbReference>
<dbReference type="PANTHER" id="PTHR34266:SF2">
    <property type="entry name" value="THIAZOLE SYNTHASE"/>
    <property type="match status" value="1"/>
</dbReference>
<dbReference type="Pfam" id="PF05690">
    <property type="entry name" value="ThiG"/>
    <property type="match status" value="1"/>
</dbReference>
<dbReference type="SUPFAM" id="SSF110399">
    <property type="entry name" value="ThiG-like"/>
    <property type="match status" value="1"/>
</dbReference>
<reference key="1">
    <citation type="journal article" date="2009" name="PLoS ONE">
        <title>Salmonella paratyphi C: genetic divergence from Salmonella choleraesuis and pathogenic convergence with Salmonella typhi.</title>
        <authorList>
            <person name="Liu W.-Q."/>
            <person name="Feng Y."/>
            <person name="Wang Y."/>
            <person name="Zou Q.-H."/>
            <person name="Chen F."/>
            <person name="Guo J.-T."/>
            <person name="Peng Y.-H."/>
            <person name="Jin Y."/>
            <person name="Li Y.-G."/>
            <person name="Hu S.-N."/>
            <person name="Johnston R.N."/>
            <person name="Liu G.-R."/>
            <person name="Liu S.-L."/>
        </authorList>
    </citation>
    <scope>NUCLEOTIDE SEQUENCE [LARGE SCALE GENOMIC DNA]</scope>
    <source>
        <strain>RKS4594</strain>
    </source>
</reference>
<accession>C0Q2S2</accession>
<organism>
    <name type="scientific">Salmonella paratyphi C (strain RKS4594)</name>
    <dbReference type="NCBI Taxonomy" id="476213"/>
    <lineage>
        <taxon>Bacteria</taxon>
        <taxon>Pseudomonadati</taxon>
        <taxon>Pseudomonadota</taxon>
        <taxon>Gammaproteobacteria</taxon>
        <taxon>Enterobacterales</taxon>
        <taxon>Enterobacteriaceae</taxon>
        <taxon>Salmonella</taxon>
    </lineage>
</organism>
<gene>
    <name evidence="1" type="primary">thiG</name>
    <name type="ordered locus">SPC_3991</name>
</gene>
<comment type="function">
    <text evidence="1">Catalyzes the rearrangement of 1-deoxy-D-xylulose 5-phosphate (DXP) to produce the thiazole phosphate moiety of thiamine. Sulfur is provided by the thiocarboxylate moiety of the carrier protein ThiS. In vitro, sulfur can be provided by H(2)S.</text>
</comment>
<comment type="catalytic activity">
    <reaction evidence="1">
        <text>[ThiS sulfur-carrier protein]-C-terminal-Gly-aminoethanethioate + 2-iminoacetate + 1-deoxy-D-xylulose 5-phosphate = [ThiS sulfur-carrier protein]-C-terminal Gly-Gly + 2-[(2R,5Z)-2-carboxy-4-methylthiazol-5(2H)-ylidene]ethyl phosphate + 2 H2O + H(+)</text>
        <dbReference type="Rhea" id="RHEA:26297"/>
        <dbReference type="Rhea" id="RHEA-COMP:12909"/>
        <dbReference type="Rhea" id="RHEA-COMP:19908"/>
        <dbReference type="ChEBI" id="CHEBI:15377"/>
        <dbReference type="ChEBI" id="CHEBI:15378"/>
        <dbReference type="ChEBI" id="CHEBI:57792"/>
        <dbReference type="ChEBI" id="CHEBI:62899"/>
        <dbReference type="ChEBI" id="CHEBI:77846"/>
        <dbReference type="ChEBI" id="CHEBI:90778"/>
        <dbReference type="ChEBI" id="CHEBI:232372"/>
        <dbReference type="EC" id="2.8.1.10"/>
    </reaction>
</comment>
<comment type="pathway">
    <text evidence="1">Cofactor biosynthesis; thiamine diphosphate biosynthesis.</text>
</comment>
<comment type="subunit">
    <text evidence="1">Homotetramer. Forms heterodimers with either ThiH or ThiS.</text>
</comment>
<comment type="subcellular location">
    <subcellularLocation>
        <location evidence="1">Cytoplasm</location>
    </subcellularLocation>
</comment>
<comment type="similarity">
    <text evidence="1">Belongs to the ThiG family.</text>
</comment>
<keyword id="KW-0963">Cytoplasm</keyword>
<keyword id="KW-0704">Schiff base</keyword>
<keyword id="KW-0784">Thiamine biosynthesis</keyword>
<keyword id="KW-0808">Transferase</keyword>
<feature type="chain" id="PRO_1000196896" description="Thiazole synthase">
    <location>
        <begin position="1"/>
        <end position="256"/>
    </location>
</feature>
<feature type="active site" description="Schiff-base intermediate with DXP" evidence="1">
    <location>
        <position position="95"/>
    </location>
</feature>
<feature type="binding site" evidence="1">
    <location>
        <position position="156"/>
    </location>
    <ligand>
        <name>1-deoxy-D-xylulose 5-phosphate</name>
        <dbReference type="ChEBI" id="CHEBI:57792"/>
    </ligand>
</feature>
<feature type="binding site" evidence="1">
    <location>
        <begin position="182"/>
        <end position="183"/>
    </location>
    <ligand>
        <name>1-deoxy-D-xylulose 5-phosphate</name>
        <dbReference type="ChEBI" id="CHEBI:57792"/>
    </ligand>
</feature>
<feature type="binding site" evidence="1">
    <location>
        <begin position="204"/>
        <end position="205"/>
    </location>
    <ligand>
        <name>1-deoxy-D-xylulose 5-phosphate</name>
        <dbReference type="ChEBI" id="CHEBI:57792"/>
    </ligand>
</feature>